<reference key="1">
    <citation type="journal article" date="2002" name="Proc. Natl. Acad. Sci. U.S.A.">
        <title>The Brucella suis genome reveals fundamental similarities between animal and plant pathogens and symbionts.</title>
        <authorList>
            <person name="Paulsen I.T."/>
            <person name="Seshadri R."/>
            <person name="Nelson K.E."/>
            <person name="Eisen J.A."/>
            <person name="Heidelberg J.F."/>
            <person name="Read T.D."/>
            <person name="Dodson R.J."/>
            <person name="Umayam L.A."/>
            <person name="Brinkac L.M."/>
            <person name="Beanan M.J."/>
            <person name="Daugherty S.C."/>
            <person name="DeBoy R.T."/>
            <person name="Durkin A.S."/>
            <person name="Kolonay J.F."/>
            <person name="Madupu R."/>
            <person name="Nelson W.C."/>
            <person name="Ayodeji B."/>
            <person name="Kraul M."/>
            <person name="Shetty J."/>
            <person name="Malek J.A."/>
            <person name="Van Aken S.E."/>
            <person name="Riedmuller S."/>
            <person name="Tettelin H."/>
            <person name="Gill S.R."/>
            <person name="White O."/>
            <person name="Salzberg S.L."/>
            <person name="Hoover D.L."/>
            <person name="Lindler L.E."/>
            <person name="Halling S.M."/>
            <person name="Boyle S.M."/>
            <person name="Fraser C.M."/>
        </authorList>
    </citation>
    <scope>NUCLEOTIDE SEQUENCE [LARGE SCALE GENOMIC DNA]</scope>
    <source>
        <strain>1330</strain>
    </source>
</reference>
<reference key="2">
    <citation type="journal article" date="2011" name="J. Bacteriol.">
        <title>Revised genome sequence of Brucella suis 1330.</title>
        <authorList>
            <person name="Tae H."/>
            <person name="Shallom S."/>
            <person name="Settlage R."/>
            <person name="Preston D."/>
            <person name="Adams L.G."/>
            <person name="Garner H.R."/>
        </authorList>
    </citation>
    <scope>NUCLEOTIDE SEQUENCE [LARGE SCALE GENOMIC DNA]</scope>
    <source>
        <strain>1330</strain>
    </source>
</reference>
<organism>
    <name type="scientific">Brucella suis biovar 1 (strain 1330)</name>
    <dbReference type="NCBI Taxonomy" id="204722"/>
    <lineage>
        <taxon>Bacteria</taxon>
        <taxon>Pseudomonadati</taxon>
        <taxon>Pseudomonadota</taxon>
        <taxon>Alphaproteobacteria</taxon>
        <taxon>Hyphomicrobiales</taxon>
        <taxon>Brucellaceae</taxon>
        <taxon>Brucella/Ochrobactrum group</taxon>
        <taxon>Brucella</taxon>
    </lineage>
</organism>
<proteinExistence type="inferred from homology"/>
<comment type="function">
    <text evidence="1">Catalyzes the transfer of the enolpyruvyl moiety of phosphoenolpyruvate (PEP) to the 5-hydroxyl of shikimate-3-phosphate (S3P) to produce enolpyruvyl shikimate-3-phosphate and inorganic phosphate.</text>
</comment>
<comment type="catalytic activity">
    <reaction evidence="1">
        <text>3-phosphoshikimate + phosphoenolpyruvate = 5-O-(1-carboxyvinyl)-3-phosphoshikimate + phosphate</text>
        <dbReference type="Rhea" id="RHEA:21256"/>
        <dbReference type="ChEBI" id="CHEBI:43474"/>
        <dbReference type="ChEBI" id="CHEBI:57701"/>
        <dbReference type="ChEBI" id="CHEBI:58702"/>
        <dbReference type="ChEBI" id="CHEBI:145989"/>
        <dbReference type="EC" id="2.5.1.19"/>
    </reaction>
    <physiologicalReaction direction="left-to-right" evidence="1">
        <dbReference type="Rhea" id="RHEA:21257"/>
    </physiologicalReaction>
</comment>
<comment type="pathway">
    <text evidence="1">Metabolic intermediate biosynthesis; chorismate biosynthesis; chorismate from D-erythrose 4-phosphate and phosphoenolpyruvate: step 6/7.</text>
</comment>
<comment type="subunit">
    <text evidence="1">Monomer.</text>
</comment>
<comment type="subcellular location">
    <subcellularLocation>
        <location evidence="1">Cytoplasm</location>
    </subcellularLocation>
</comment>
<comment type="similarity">
    <text evidence="1">Belongs to the EPSP synthase family.</text>
</comment>
<keyword id="KW-0028">Amino-acid biosynthesis</keyword>
<keyword id="KW-0057">Aromatic amino acid biosynthesis</keyword>
<keyword id="KW-0963">Cytoplasm</keyword>
<keyword id="KW-0808">Transferase</keyword>
<protein>
    <recommendedName>
        <fullName evidence="1">3-phosphoshikimate 1-carboxyvinyltransferase</fullName>
        <ecNumber evidence="1">2.5.1.19</ecNumber>
    </recommendedName>
    <alternativeName>
        <fullName evidence="1">5-enolpyruvylshikimate-3-phosphate synthase</fullName>
        <shortName evidence="1">EPSP synthase</shortName>
        <shortName evidence="1">EPSPS</shortName>
    </alternativeName>
</protein>
<accession>Q8G3C4</accession>
<accession>G0KAJ7</accession>
<sequence>MSHSACPKPATARHSQALTGEIRIPGDKSISHRSFMFGGLASGKTRITGLLEGEDVINTGRAMQAMGARIRKEGDVWIINGVGNGCLLQPEAPLDFGNAGTGARLTMGLVGTYDMKTSFIGDASLSKRPMGRVLNPLREMGVQVEAAEGDRMPLTLIGPRTANPIAYRVPMASAQVKSAVLLAGLNTPGVTTVIEPVMTRDHTEKMLQGFGADLTVETDKDGVRHIRIVGQGKLTGQTIDVPGDPSSTAFPLVAALLVEGSDVTIRNVLMNPTRTGLILTLQEMGADIEIIDPRLAGGEDVADLRVRASKLKGVVVPPERAPSMIDEYPVLAIAASFAEGETVMDGLDELRVKESDRLAAVARGLEANGVDCTEGEMSLTVRGRPGGKGLGGGTVATHLDHRIAMSFLVMGLASEKPVTVDDSTMIATSFPEFMGMMAGLGAKIAESGAE</sequence>
<evidence type="ECO:0000255" key="1">
    <source>
        <dbReference type="HAMAP-Rule" id="MF_00210"/>
    </source>
</evidence>
<dbReference type="EC" id="2.5.1.19" evidence="1"/>
<dbReference type="EMBL" id="AE014291">
    <property type="protein sequence ID" value="AAN28982.1"/>
    <property type="molecule type" value="Genomic_DNA"/>
</dbReference>
<dbReference type="EMBL" id="CP002997">
    <property type="protein sequence ID" value="AEM17394.1"/>
    <property type="molecule type" value="Genomic_DNA"/>
</dbReference>
<dbReference type="RefSeq" id="WP_004691209.1">
    <property type="nucleotide sequence ID" value="NZ_KN046804.1"/>
</dbReference>
<dbReference type="SMR" id="Q8G3C4"/>
<dbReference type="GeneID" id="55589831"/>
<dbReference type="KEGG" id="bms:BR0025"/>
<dbReference type="KEGG" id="bsi:BS1330_I0025"/>
<dbReference type="PATRIC" id="fig|204722.21.peg.591"/>
<dbReference type="HOGENOM" id="CLU_024321_0_1_5"/>
<dbReference type="PhylomeDB" id="Q8G3C4"/>
<dbReference type="UniPathway" id="UPA00053">
    <property type="reaction ID" value="UER00089"/>
</dbReference>
<dbReference type="Proteomes" id="UP000007104">
    <property type="component" value="Chromosome I"/>
</dbReference>
<dbReference type="GO" id="GO:0005737">
    <property type="term" value="C:cytoplasm"/>
    <property type="evidence" value="ECO:0007669"/>
    <property type="project" value="UniProtKB-SubCell"/>
</dbReference>
<dbReference type="GO" id="GO:0003866">
    <property type="term" value="F:3-phosphoshikimate 1-carboxyvinyltransferase activity"/>
    <property type="evidence" value="ECO:0007669"/>
    <property type="project" value="UniProtKB-UniRule"/>
</dbReference>
<dbReference type="GO" id="GO:0008652">
    <property type="term" value="P:amino acid biosynthetic process"/>
    <property type="evidence" value="ECO:0007669"/>
    <property type="project" value="UniProtKB-KW"/>
</dbReference>
<dbReference type="GO" id="GO:0009073">
    <property type="term" value="P:aromatic amino acid family biosynthetic process"/>
    <property type="evidence" value="ECO:0007669"/>
    <property type="project" value="UniProtKB-KW"/>
</dbReference>
<dbReference type="GO" id="GO:0009423">
    <property type="term" value="P:chorismate biosynthetic process"/>
    <property type="evidence" value="ECO:0007669"/>
    <property type="project" value="UniProtKB-UniRule"/>
</dbReference>
<dbReference type="CDD" id="cd01556">
    <property type="entry name" value="EPSP_synthase"/>
    <property type="match status" value="1"/>
</dbReference>
<dbReference type="FunFam" id="3.65.10.10:FF:000006">
    <property type="entry name" value="3-phosphoshikimate 1-carboxyvinyltransferase"/>
    <property type="match status" value="1"/>
</dbReference>
<dbReference type="Gene3D" id="3.65.10.10">
    <property type="entry name" value="Enolpyruvate transferase domain"/>
    <property type="match status" value="2"/>
</dbReference>
<dbReference type="HAMAP" id="MF_00210">
    <property type="entry name" value="EPSP_synth"/>
    <property type="match status" value="1"/>
</dbReference>
<dbReference type="InterPro" id="IPR001986">
    <property type="entry name" value="Enolpyruvate_Tfrase_dom"/>
</dbReference>
<dbReference type="InterPro" id="IPR036968">
    <property type="entry name" value="Enolpyruvate_Tfrase_sf"/>
</dbReference>
<dbReference type="InterPro" id="IPR006264">
    <property type="entry name" value="EPSP_synthase"/>
</dbReference>
<dbReference type="InterPro" id="IPR023193">
    <property type="entry name" value="EPSP_synthase_CS"/>
</dbReference>
<dbReference type="InterPro" id="IPR013792">
    <property type="entry name" value="RNA3'P_cycl/enolpyr_Trfase_a/b"/>
</dbReference>
<dbReference type="NCBIfam" id="TIGR01356">
    <property type="entry name" value="aroA"/>
    <property type="match status" value="1"/>
</dbReference>
<dbReference type="PANTHER" id="PTHR21090">
    <property type="entry name" value="AROM/DEHYDROQUINATE SYNTHASE"/>
    <property type="match status" value="1"/>
</dbReference>
<dbReference type="PANTHER" id="PTHR21090:SF5">
    <property type="entry name" value="PENTAFUNCTIONAL AROM POLYPEPTIDE"/>
    <property type="match status" value="1"/>
</dbReference>
<dbReference type="Pfam" id="PF00275">
    <property type="entry name" value="EPSP_synthase"/>
    <property type="match status" value="1"/>
</dbReference>
<dbReference type="PIRSF" id="PIRSF000505">
    <property type="entry name" value="EPSPS"/>
    <property type="match status" value="1"/>
</dbReference>
<dbReference type="SUPFAM" id="SSF55205">
    <property type="entry name" value="EPT/RTPC-like"/>
    <property type="match status" value="1"/>
</dbReference>
<dbReference type="PROSITE" id="PS00104">
    <property type="entry name" value="EPSP_SYNTHASE_1"/>
    <property type="match status" value="1"/>
</dbReference>
<dbReference type="PROSITE" id="PS00885">
    <property type="entry name" value="EPSP_SYNTHASE_2"/>
    <property type="match status" value="1"/>
</dbReference>
<name>AROA_BRUSU</name>
<feature type="chain" id="PRO_0000088234" description="3-phosphoshikimate 1-carboxyvinyltransferase">
    <location>
        <begin position="1"/>
        <end position="450"/>
    </location>
</feature>
<feature type="active site" description="Proton acceptor" evidence="1">
    <location>
        <position position="326"/>
    </location>
</feature>
<feature type="binding site" evidence="1">
    <location>
        <position position="28"/>
    </location>
    <ligand>
        <name>3-phosphoshikimate</name>
        <dbReference type="ChEBI" id="CHEBI:145989"/>
    </ligand>
</feature>
<feature type="binding site" evidence="1">
    <location>
        <position position="28"/>
    </location>
    <ligand>
        <name>phosphoenolpyruvate</name>
        <dbReference type="ChEBI" id="CHEBI:58702"/>
    </ligand>
</feature>
<feature type="binding site" evidence="1">
    <location>
        <position position="29"/>
    </location>
    <ligand>
        <name>3-phosphoshikimate</name>
        <dbReference type="ChEBI" id="CHEBI:145989"/>
    </ligand>
</feature>
<feature type="binding site" evidence="1">
    <location>
        <position position="33"/>
    </location>
    <ligand>
        <name>3-phosphoshikimate</name>
        <dbReference type="ChEBI" id="CHEBI:145989"/>
    </ligand>
</feature>
<feature type="binding site" evidence="1">
    <location>
        <position position="100"/>
    </location>
    <ligand>
        <name>phosphoenolpyruvate</name>
        <dbReference type="ChEBI" id="CHEBI:58702"/>
    </ligand>
</feature>
<feature type="binding site" evidence="1">
    <location>
        <position position="128"/>
    </location>
    <ligand>
        <name>phosphoenolpyruvate</name>
        <dbReference type="ChEBI" id="CHEBI:58702"/>
    </ligand>
</feature>
<feature type="binding site" evidence="1">
    <location>
        <position position="173"/>
    </location>
    <ligand>
        <name>3-phosphoshikimate</name>
        <dbReference type="ChEBI" id="CHEBI:145989"/>
    </ligand>
</feature>
<feature type="binding site" evidence="1">
    <location>
        <position position="175"/>
    </location>
    <ligand>
        <name>3-phosphoshikimate</name>
        <dbReference type="ChEBI" id="CHEBI:145989"/>
    </ligand>
</feature>
<feature type="binding site" evidence="1">
    <location>
        <position position="175"/>
    </location>
    <ligand>
        <name>phosphoenolpyruvate</name>
        <dbReference type="ChEBI" id="CHEBI:58702"/>
    </ligand>
</feature>
<feature type="binding site" evidence="1">
    <location>
        <position position="326"/>
    </location>
    <ligand>
        <name>3-phosphoshikimate</name>
        <dbReference type="ChEBI" id="CHEBI:145989"/>
    </ligand>
</feature>
<feature type="binding site" evidence="1">
    <location>
        <position position="353"/>
    </location>
    <ligand>
        <name>3-phosphoshikimate</name>
        <dbReference type="ChEBI" id="CHEBI:145989"/>
    </ligand>
</feature>
<feature type="binding site" evidence="1">
    <location>
        <position position="357"/>
    </location>
    <ligand>
        <name>phosphoenolpyruvate</name>
        <dbReference type="ChEBI" id="CHEBI:58702"/>
    </ligand>
</feature>
<feature type="binding site" evidence="1">
    <location>
        <position position="402"/>
    </location>
    <ligand>
        <name>phosphoenolpyruvate</name>
        <dbReference type="ChEBI" id="CHEBI:58702"/>
    </ligand>
</feature>
<gene>
    <name evidence="1" type="primary">aroA</name>
    <name type="ordered locus">BR0025</name>
    <name type="ordered locus">BS1330_I0025</name>
</gene>